<protein>
    <recommendedName>
        <fullName evidence="5">Homogentisate phytyltransferase</fullName>
        <shortName evidence="6">HPT</shortName>
        <ecNumber evidence="4">2.5.1.115</ecNumber>
    </recommendedName>
</protein>
<comment type="function">
    <text evidence="2 3 4">Involved in the synthesis of tocopherol (vitamin E) (PubMed:11418103, PubMed:11706191, PubMed:12011362). Catalyzes the condensation of homogentisate and phytyl diphosphate to form dimethylphytylhydrquinone (PubMed:12011362).</text>
</comment>
<comment type="catalytic activity">
    <reaction evidence="4">
        <text>phytyl diphosphate + homogentisate + H(+) = 2-methyl-6-phytyl-1,4-benzene-1,4-diol + CO2 + diphosphate</text>
        <dbReference type="Rhea" id="RHEA:37975"/>
        <dbReference type="ChEBI" id="CHEBI:15378"/>
        <dbReference type="ChEBI" id="CHEBI:16169"/>
        <dbReference type="ChEBI" id="CHEBI:16526"/>
        <dbReference type="ChEBI" id="CHEBI:33019"/>
        <dbReference type="ChEBI" id="CHEBI:75434"/>
        <dbReference type="ChEBI" id="CHEBI:75920"/>
        <dbReference type="EC" id="2.5.1.115"/>
    </reaction>
</comment>
<comment type="pathway">
    <text evidence="6">Cofactor biosynthesis; tocopherol biosynthesis.</text>
</comment>
<comment type="subcellular location">
    <subcellularLocation>
        <location evidence="1">Membrane</location>
        <topology evidence="1">Multi-pass membrane protein</topology>
    </subcellularLocation>
</comment>
<comment type="disruption phenotype">
    <text evidence="2 3 4">Impaired in biosynthesis of alpha-tocopherol.</text>
</comment>
<comment type="similarity">
    <text evidence="6">Belongs to the UbiA prenyltransferase family.</text>
</comment>
<sequence>MATIQAFWRFSRPHTIIGTTLSVWAVYLLTILGDGNSVNSPASLDLVFGAWLACLLGNVYIVGLNQLWDVDIDRINKPNLPLANGDFSIAQGRWIVGLCGVASLAIAWGLGLWLGLTVGISLIIGTAYSVPPVRLKRFSLLAALCILTVRGIVVNLGLFLFFRIGLGYPPTLITPIWVLTLFILVFTVAIAIFKDVPDMEGDRQFKIQTLTLQIGKQNVFRGTLILLTGCYLAMAIWGLWAAMPLNTAFLIVSHLCLLALLWWRSRDVHLESKTEIASFYQFIWKLFFLEYLLYPLALWLPNFSNTIF</sequence>
<organism>
    <name type="scientific">Synechocystis sp. (strain ATCC 27184 / PCC 6803 / Kazusa)</name>
    <dbReference type="NCBI Taxonomy" id="1111708"/>
    <lineage>
        <taxon>Bacteria</taxon>
        <taxon>Bacillati</taxon>
        <taxon>Cyanobacteriota</taxon>
        <taxon>Cyanophyceae</taxon>
        <taxon>Synechococcales</taxon>
        <taxon>Merismopediaceae</taxon>
        <taxon>Synechocystis</taxon>
    </lineage>
</organism>
<accession>P73726</accession>
<dbReference type="EC" id="2.5.1.115" evidence="4"/>
<dbReference type="EMBL" id="BA000022">
    <property type="protein sequence ID" value="BAA17774.1"/>
    <property type="molecule type" value="Genomic_DNA"/>
</dbReference>
<dbReference type="PIR" id="S74813">
    <property type="entry name" value="S74813"/>
</dbReference>
<dbReference type="SMR" id="P73726"/>
<dbReference type="STRING" id="1148.gene:10498641"/>
<dbReference type="SwissLipids" id="SLP:000001496"/>
<dbReference type="PaxDb" id="1148-1652856"/>
<dbReference type="EnsemblBacteria" id="BAA17774">
    <property type="protein sequence ID" value="BAA17774"/>
    <property type="gene ID" value="BAA17774"/>
</dbReference>
<dbReference type="KEGG" id="syn:slr1736"/>
<dbReference type="eggNOG" id="COG0382">
    <property type="taxonomic scope" value="Bacteria"/>
</dbReference>
<dbReference type="InParanoid" id="P73726"/>
<dbReference type="PhylomeDB" id="P73726"/>
<dbReference type="BioCyc" id="MetaCyc:MONOMER-13902"/>
<dbReference type="BRENDA" id="2.5.1.115">
    <property type="organism ID" value="382"/>
</dbReference>
<dbReference type="BRENDA" id="2.5.1.116">
    <property type="organism ID" value="382"/>
</dbReference>
<dbReference type="UniPathway" id="UPA00160"/>
<dbReference type="Proteomes" id="UP000001425">
    <property type="component" value="Chromosome"/>
</dbReference>
<dbReference type="GO" id="GO:0016020">
    <property type="term" value="C:membrane"/>
    <property type="evidence" value="ECO:0007669"/>
    <property type="project" value="UniProtKB-SubCell"/>
</dbReference>
<dbReference type="GO" id="GO:0010176">
    <property type="term" value="F:homogentisate phytyltransferase activity"/>
    <property type="evidence" value="ECO:0007669"/>
    <property type="project" value="UniProtKB-EC"/>
</dbReference>
<dbReference type="GO" id="GO:0004659">
    <property type="term" value="F:prenyltransferase activity"/>
    <property type="evidence" value="ECO:0000318"/>
    <property type="project" value="GO_Central"/>
</dbReference>
<dbReference type="GO" id="GO:0009234">
    <property type="term" value="P:menaquinone biosynthetic process"/>
    <property type="evidence" value="ECO:0000318"/>
    <property type="project" value="GO_Central"/>
</dbReference>
<dbReference type="GO" id="GO:0010189">
    <property type="term" value="P:vitamin E biosynthetic process"/>
    <property type="evidence" value="ECO:0000315"/>
    <property type="project" value="CACAO"/>
</dbReference>
<dbReference type="GO" id="GO:0042371">
    <property type="term" value="P:vitamin K biosynthetic process"/>
    <property type="evidence" value="ECO:0000318"/>
    <property type="project" value="GO_Central"/>
</dbReference>
<dbReference type="CDD" id="cd13960">
    <property type="entry name" value="PT_UbiA_HPT1"/>
    <property type="match status" value="1"/>
</dbReference>
<dbReference type="FunFam" id="1.10.357.140:FF:000011">
    <property type="entry name" value="Homogentisate phytyltransferase 1"/>
    <property type="match status" value="1"/>
</dbReference>
<dbReference type="Gene3D" id="1.10.357.140">
    <property type="entry name" value="UbiA prenyltransferase"/>
    <property type="match status" value="1"/>
</dbReference>
<dbReference type="InterPro" id="IPR044502">
    <property type="entry name" value="AtHST-like"/>
</dbReference>
<dbReference type="InterPro" id="IPR000537">
    <property type="entry name" value="UbiA_prenyltransferase"/>
</dbReference>
<dbReference type="InterPro" id="IPR044878">
    <property type="entry name" value="UbiA_sf"/>
</dbReference>
<dbReference type="NCBIfam" id="NF009525">
    <property type="entry name" value="PRK12887.1"/>
    <property type="match status" value="1"/>
</dbReference>
<dbReference type="PANTHER" id="PTHR43009:SF7">
    <property type="entry name" value="HOMOGENTISATE GERANYLGERANYLTRANSFERASE, CHLOROPLASTIC"/>
    <property type="match status" value="1"/>
</dbReference>
<dbReference type="PANTHER" id="PTHR43009">
    <property type="entry name" value="HOMOGENTISATE SOLANESYLTRANSFERASE, CHLOROPLASTIC"/>
    <property type="match status" value="1"/>
</dbReference>
<dbReference type="Pfam" id="PF01040">
    <property type="entry name" value="UbiA"/>
    <property type="match status" value="1"/>
</dbReference>
<reference key="1">
    <citation type="journal article" date="1996" name="DNA Res.">
        <title>Sequence analysis of the genome of the unicellular cyanobacterium Synechocystis sp. strain PCC6803. II. Sequence determination of the entire genome and assignment of potential protein-coding regions.</title>
        <authorList>
            <person name="Kaneko T."/>
            <person name="Sato S."/>
            <person name="Kotani H."/>
            <person name="Tanaka A."/>
            <person name="Asamizu E."/>
            <person name="Nakamura Y."/>
            <person name="Miyajima N."/>
            <person name="Hirosawa M."/>
            <person name="Sugiura M."/>
            <person name="Sasamoto S."/>
            <person name="Kimura T."/>
            <person name="Hosouchi T."/>
            <person name="Matsuno A."/>
            <person name="Muraki A."/>
            <person name="Nakazaki N."/>
            <person name="Naruo K."/>
            <person name="Okumura S."/>
            <person name="Shimpo S."/>
            <person name="Takeuchi C."/>
            <person name="Wada T."/>
            <person name="Watanabe A."/>
            <person name="Yamada M."/>
            <person name="Yasuda M."/>
            <person name="Tabata S."/>
        </authorList>
    </citation>
    <scope>NUCLEOTIDE SEQUENCE [LARGE SCALE GENOMIC DNA]</scope>
    <source>
        <strain>ATCC 27184 / PCC 6803 / Kazusa</strain>
    </source>
</reference>
<reference key="2">
    <citation type="journal article" date="2001" name="FEBS Lett.">
        <title>A novel phytyltransferase from Synechocystis sp. PCC 6803 involved in tocopherol biosynthesis.</title>
        <authorList>
            <person name="Schledz M."/>
            <person name="Seidler A."/>
            <person name="Beyer P."/>
            <person name="Neuhaus G."/>
        </authorList>
    </citation>
    <scope>FUNCTION</scope>
    <scope>DISRUPTION PHENOTYPE</scope>
</reference>
<reference key="3">
    <citation type="journal article" date="2001" name="Plant Physiol.">
        <title>Isolation and functional analysis of homogentisate phytyltransferase from Synechocystis sp. PCC 6803 and Arabidopsis.</title>
        <authorList>
            <person name="Collakova E."/>
            <person name="DellaPenna D."/>
        </authorList>
    </citation>
    <scope>FUNCTION</scope>
    <scope>DISRUPTION PHENOTYPE</scope>
</reference>
<reference key="4">
    <citation type="journal article" date="2002" name="Plant Physiol.">
        <title>Isolation and characterization of homogentisate phytyltransferase genes from Synechocystis sp. PCC 6803 and Arabidopsis.</title>
        <authorList>
            <person name="Savidge B."/>
            <person name="Weiss J.D."/>
            <person name="Wong Y.H.H."/>
            <person name="Lassner M.W."/>
            <person name="Mitsky T.A."/>
            <person name="Shewmaker C.K."/>
            <person name="Post-Beittenmiller D."/>
            <person name="Valentin H.E."/>
        </authorList>
    </citation>
    <scope>FUNCTION</scope>
    <scope>CATALYTIC ACTIVITY</scope>
    <scope>DISRUPTION PHENOTYPE</scope>
</reference>
<proteinExistence type="evidence at protein level"/>
<keyword id="KW-0472">Membrane</keyword>
<keyword id="KW-1185">Reference proteome</keyword>
<keyword id="KW-0808">Transferase</keyword>
<keyword id="KW-0812">Transmembrane</keyword>
<keyword id="KW-1133">Transmembrane helix</keyword>
<feature type="chain" id="PRO_0000430739" description="Homogentisate phytyltransferase">
    <location>
        <begin position="1"/>
        <end position="308"/>
    </location>
</feature>
<feature type="transmembrane region" description="Helical; Name=1" evidence="1">
    <location>
        <begin position="13"/>
        <end position="33"/>
    </location>
</feature>
<feature type="transmembrane region" description="Helical; Name=2" evidence="1">
    <location>
        <begin position="44"/>
        <end position="64"/>
    </location>
</feature>
<feature type="transmembrane region" description="Helical; Name=3" evidence="1">
    <location>
        <begin position="104"/>
        <end position="124"/>
    </location>
</feature>
<feature type="transmembrane region" description="Helical; Name=4" evidence="1">
    <location>
        <begin position="142"/>
        <end position="162"/>
    </location>
</feature>
<feature type="transmembrane region" description="Helical; Name=5" evidence="1">
    <location>
        <begin position="173"/>
        <end position="193"/>
    </location>
</feature>
<feature type="transmembrane region" description="Helical; Name=6" evidence="1">
    <location>
        <begin position="219"/>
        <end position="241"/>
    </location>
</feature>
<feature type="transmembrane region" description="Helical; Name=7" evidence="1">
    <location>
        <begin position="245"/>
        <end position="263"/>
    </location>
</feature>
<feature type="transmembrane region" description="Helical; Name=8" evidence="1">
    <location>
        <begin position="279"/>
        <end position="299"/>
    </location>
</feature>
<evidence type="ECO:0000255" key="1"/>
<evidence type="ECO:0000269" key="2">
    <source>
    </source>
</evidence>
<evidence type="ECO:0000269" key="3">
    <source>
    </source>
</evidence>
<evidence type="ECO:0000269" key="4">
    <source>
    </source>
</evidence>
<evidence type="ECO:0000303" key="5">
    <source>
    </source>
</evidence>
<evidence type="ECO:0000305" key="6"/>
<evidence type="ECO:0000312" key="7">
    <source>
        <dbReference type="EMBL" id="BAA17774.1"/>
    </source>
</evidence>
<name>HGGT_SYNY3</name>
<gene>
    <name evidence="7" type="ordered locus">slr1736</name>
</gene>